<keyword id="KW-0413">Isomerase</keyword>
<keyword id="KW-0479">Metal-binding</keyword>
<keyword id="KW-1185">Reference proteome</keyword>
<keyword id="KW-0862">Zinc</keyword>
<name>KDUI2_ENTFA</name>
<feature type="chain" id="PRO_0000215489" description="4-deoxy-L-threo-5-hexosulose-uronate ketol-isomerase 2">
    <location>
        <begin position="1"/>
        <end position="276"/>
    </location>
</feature>
<feature type="binding site" evidence="1">
    <location>
        <position position="194"/>
    </location>
    <ligand>
        <name>Zn(2+)</name>
        <dbReference type="ChEBI" id="CHEBI:29105"/>
    </ligand>
</feature>
<feature type="binding site" evidence="1">
    <location>
        <position position="196"/>
    </location>
    <ligand>
        <name>Zn(2+)</name>
        <dbReference type="ChEBI" id="CHEBI:29105"/>
    </ligand>
</feature>
<feature type="binding site" evidence="1">
    <location>
        <position position="201"/>
    </location>
    <ligand>
        <name>Zn(2+)</name>
        <dbReference type="ChEBI" id="CHEBI:29105"/>
    </ligand>
</feature>
<feature type="binding site" evidence="1">
    <location>
        <position position="243"/>
    </location>
    <ligand>
        <name>Zn(2+)</name>
        <dbReference type="ChEBI" id="CHEBI:29105"/>
    </ligand>
</feature>
<comment type="function">
    <text evidence="1">Catalyzes the isomerization of 5-dehydro-4-deoxy-D-glucuronate to 3-deoxy-D-glycero-2,5-hexodiulosonate.</text>
</comment>
<comment type="catalytic activity">
    <reaction>
        <text>5-dehydro-4-deoxy-D-glucuronate = 3-deoxy-D-glycero-2,5-hexodiulosonate</text>
        <dbReference type="Rhea" id="RHEA:23896"/>
        <dbReference type="ChEBI" id="CHEBI:17117"/>
        <dbReference type="ChEBI" id="CHEBI:29071"/>
        <dbReference type="EC" id="5.3.1.17"/>
    </reaction>
</comment>
<comment type="cofactor">
    <cofactor evidence="1">
        <name>Zn(2+)</name>
        <dbReference type="ChEBI" id="CHEBI:29105"/>
    </cofactor>
    <text evidence="1">Binds 1 zinc ion per subunit.</text>
</comment>
<comment type="pathway">
    <text>Glycan metabolism; pectin degradation; 2-dehydro-3-deoxy-D-gluconate from pectin: step 4/5.</text>
</comment>
<comment type="similarity">
    <text evidence="2">Belongs to the KduI family.</text>
</comment>
<accession>Q832G5</accession>
<dbReference type="EC" id="5.3.1.17"/>
<dbReference type="EMBL" id="AE016830">
    <property type="protein sequence ID" value="AAO81992.1"/>
    <property type="molecule type" value="Genomic_DNA"/>
</dbReference>
<dbReference type="RefSeq" id="NP_815922.1">
    <property type="nucleotide sequence ID" value="NC_004668.1"/>
</dbReference>
<dbReference type="SMR" id="Q832G5"/>
<dbReference type="STRING" id="226185.EF_2264"/>
<dbReference type="EnsemblBacteria" id="AAO81992">
    <property type="protein sequence ID" value="AAO81992"/>
    <property type="gene ID" value="EF_2264"/>
</dbReference>
<dbReference type="KEGG" id="efa:EF2264"/>
<dbReference type="PATRIC" id="fig|226185.9.peg.2122"/>
<dbReference type="eggNOG" id="COG3717">
    <property type="taxonomic scope" value="Bacteria"/>
</dbReference>
<dbReference type="HOGENOM" id="CLU_062609_0_0_9"/>
<dbReference type="UniPathway" id="UPA00545">
    <property type="reaction ID" value="UER00826"/>
</dbReference>
<dbReference type="Proteomes" id="UP000001415">
    <property type="component" value="Chromosome"/>
</dbReference>
<dbReference type="GO" id="GO:0008697">
    <property type="term" value="F:4-deoxy-L-threo-5-hexosulose-uronate ketol-isomerase activity"/>
    <property type="evidence" value="ECO:0007669"/>
    <property type="project" value="UniProtKB-UniRule"/>
</dbReference>
<dbReference type="GO" id="GO:0008270">
    <property type="term" value="F:zinc ion binding"/>
    <property type="evidence" value="ECO:0007669"/>
    <property type="project" value="UniProtKB-UniRule"/>
</dbReference>
<dbReference type="GO" id="GO:0019698">
    <property type="term" value="P:D-galacturonate catabolic process"/>
    <property type="evidence" value="ECO:0007669"/>
    <property type="project" value="TreeGrafter"/>
</dbReference>
<dbReference type="GO" id="GO:0042840">
    <property type="term" value="P:D-glucuronate catabolic process"/>
    <property type="evidence" value="ECO:0007669"/>
    <property type="project" value="TreeGrafter"/>
</dbReference>
<dbReference type="GO" id="GO:0045490">
    <property type="term" value="P:pectin catabolic process"/>
    <property type="evidence" value="ECO:0007669"/>
    <property type="project" value="UniProtKB-UniRule"/>
</dbReference>
<dbReference type="CDD" id="cd20491">
    <property type="entry name" value="cupin_KduI_C"/>
    <property type="match status" value="1"/>
</dbReference>
<dbReference type="CDD" id="cd20294">
    <property type="entry name" value="cupin_KduI_N"/>
    <property type="match status" value="1"/>
</dbReference>
<dbReference type="Gene3D" id="2.60.120.10">
    <property type="entry name" value="Jelly Rolls"/>
    <property type="match status" value="1"/>
</dbReference>
<dbReference type="Gene3D" id="2.60.120.520">
    <property type="entry name" value="pectin degrading enzyme 5-keto 4- deoxyuronate isomerase, domain 1"/>
    <property type="match status" value="1"/>
</dbReference>
<dbReference type="HAMAP" id="MF_00687">
    <property type="entry name" value="KduI"/>
    <property type="match status" value="1"/>
</dbReference>
<dbReference type="InterPro" id="IPR007045">
    <property type="entry name" value="KduI"/>
</dbReference>
<dbReference type="InterPro" id="IPR021120">
    <property type="entry name" value="KduI/IolB_isomerase"/>
</dbReference>
<dbReference type="InterPro" id="IPR027449">
    <property type="entry name" value="KduI_N"/>
</dbReference>
<dbReference type="InterPro" id="IPR014710">
    <property type="entry name" value="RmlC-like_jellyroll"/>
</dbReference>
<dbReference type="InterPro" id="IPR011051">
    <property type="entry name" value="RmlC_Cupin_sf"/>
</dbReference>
<dbReference type="NCBIfam" id="NF002091">
    <property type="entry name" value="PRK00924.1"/>
    <property type="match status" value="1"/>
</dbReference>
<dbReference type="PANTHER" id="PTHR38461">
    <property type="entry name" value="4-DEOXY-L-THREO-5-HEXOSULOSE-URONATE KETOL-ISOMERASE"/>
    <property type="match status" value="1"/>
</dbReference>
<dbReference type="PANTHER" id="PTHR38461:SF1">
    <property type="entry name" value="4-DEOXY-L-THREO-5-HEXOSULOSE-URONATE KETOL-ISOMERASE"/>
    <property type="match status" value="1"/>
</dbReference>
<dbReference type="Pfam" id="PF04962">
    <property type="entry name" value="KduI"/>
    <property type="match status" value="1"/>
</dbReference>
<dbReference type="PIRSF" id="PIRSF006625">
    <property type="entry name" value="KduI"/>
    <property type="match status" value="1"/>
</dbReference>
<dbReference type="SUPFAM" id="SSF51182">
    <property type="entry name" value="RmlC-like cupins"/>
    <property type="match status" value="1"/>
</dbReference>
<organism>
    <name type="scientific">Enterococcus faecalis (strain ATCC 700802 / V583)</name>
    <dbReference type="NCBI Taxonomy" id="226185"/>
    <lineage>
        <taxon>Bacteria</taxon>
        <taxon>Bacillati</taxon>
        <taxon>Bacillota</taxon>
        <taxon>Bacilli</taxon>
        <taxon>Lactobacillales</taxon>
        <taxon>Enterococcaceae</taxon>
        <taxon>Enterococcus</taxon>
    </lineage>
</organism>
<sequence>MDTRYTHSPKDISHYSTEELRKEFLVEKVFVPNEVSLTYTHNDRMIFGGVTPTTESLEIILNKELGVDYFLERRELGVINIGGPGFIEIDGRKEAMKKQDGYYVGKETRQVIFSSEDAADPAKFYISSAPAHHKYPNVKISIDEIKPMETGEALTLNERKIYQYIHPNICESCQLQMGYTILEPGSSWNTMPCHTHERRMEAYVYFDMEEDTKIFHMMGDPAETKHLVMGNEQAVISPSWSIHSGVGTSNYSFIWAMCGENITYTDMDMVPMDELK</sequence>
<reference key="1">
    <citation type="journal article" date="2003" name="Science">
        <title>Role of mobile DNA in the evolution of vancomycin-resistant Enterococcus faecalis.</title>
        <authorList>
            <person name="Paulsen I.T."/>
            <person name="Banerjei L."/>
            <person name="Myers G.S.A."/>
            <person name="Nelson K.E."/>
            <person name="Seshadri R."/>
            <person name="Read T.D."/>
            <person name="Fouts D.E."/>
            <person name="Eisen J.A."/>
            <person name="Gill S.R."/>
            <person name="Heidelberg J.F."/>
            <person name="Tettelin H."/>
            <person name="Dodson R.J."/>
            <person name="Umayam L.A."/>
            <person name="Brinkac L.M."/>
            <person name="Beanan M.J."/>
            <person name="Daugherty S.C."/>
            <person name="DeBoy R.T."/>
            <person name="Durkin S.A."/>
            <person name="Kolonay J.F."/>
            <person name="Madupu R."/>
            <person name="Nelson W.C."/>
            <person name="Vamathevan J.J."/>
            <person name="Tran B."/>
            <person name="Upton J."/>
            <person name="Hansen T."/>
            <person name="Shetty J."/>
            <person name="Khouri H.M."/>
            <person name="Utterback T.R."/>
            <person name="Radune D."/>
            <person name="Ketchum K.A."/>
            <person name="Dougherty B.A."/>
            <person name="Fraser C.M."/>
        </authorList>
    </citation>
    <scope>NUCLEOTIDE SEQUENCE [LARGE SCALE GENOMIC DNA]</scope>
    <source>
        <strain>ATCC 700802 / V583</strain>
    </source>
</reference>
<evidence type="ECO:0000250" key="1"/>
<evidence type="ECO:0000305" key="2"/>
<proteinExistence type="inferred from homology"/>
<gene>
    <name type="primary">kduI2</name>
    <name type="synonym">kduI-2</name>
    <name type="ordered locus">EF_2264</name>
</gene>
<protein>
    <recommendedName>
        <fullName>4-deoxy-L-threo-5-hexosulose-uronate ketol-isomerase 2</fullName>
        <ecNumber>5.3.1.17</ecNumber>
    </recommendedName>
    <alternativeName>
        <fullName>5-keto-4-deoxyuronate isomerase 2</fullName>
    </alternativeName>
    <alternativeName>
        <fullName>DKI isomerase 2</fullName>
    </alternativeName>
</protein>